<evidence type="ECO:0000250" key="1">
    <source>
        <dbReference type="UniProtKB" id="Q9TZQ3"/>
    </source>
</evidence>
<evidence type="ECO:0000256" key="2">
    <source>
        <dbReference type="SAM" id="MobiDB-lite"/>
    </source>
</evidence>
<evidence type="ECO:0000269" key="3">
    <source>
    </source>
</evidence>
<evidence type="ECO:0000305" key="4"/>
<evidence type="ECO:0000305" key="5">
    <source>
    </source>
</evidence>
<evidence type="ECO:0000312" key="6">
    <source>
        <dbReference type="EMBL" id="EFO90587.1"/>
    </source>
</evidence>
<evidence type="ECO:0007744" key="7">
    <source>
        <dbReference type="PDB" id="5COW"/>
    </source>
</evidence>
<evidence type="ECO:0007744" key="8">
    <source>
        <dbReference type="PDB" id="5CV3"/>
    </source>
</evidence>
<evidence type="ECO:0007829" key="9">
    <source>
        <dbReference type="PDB" id="5COW"/>
    </source>
</evidence>
<name>PGL1_CAERE</name>
<keyword id="KW-0002">3D-structure</keyword>
<keyword id="KW-0217">Developmental protein</keyword>
<keyword id="KW-0221">Differentiation</keyword>
<keyword id="KW-0255">Endonuclease</keyword>
<keyword id="KW-0378">Hydrolase</keyword>
<keyword id="KW-0456">Lyase</keyword>
<keyword id="KW-0540">Nuclease</keyword>
<keyword id="KW-0896">Oogenesis</keyword>
<keyword id="KW-1185">Reference proteome</keyword>
<keyword id="KW-0677">Repeat</keyword>
<keyword id="KW-0694">RNA-binding</keyword>
<organism>
    <name type="scientific">Caenorhabditis remanei</name>
    <name type="common">Caenorhabditis vulgaris</name>
    <dbReference type="NCBI Taxonomy" id="31234"/>
    <lineage>
        <taxon>Eukaryota</taxon>
        <taxon>Metazoa</taxon>
        <taxon>Ecdysozoa</taxon>
        <taxon>Nematoda</taxon>
        <taxon>Chromadorea</taxon>
        <taxon>Rhabditida</taxon>
        <taxon>Rhabditina</taxon>
        <taxon>Rhabditomorpha</taxon>
        <taxon>Rhabditoidea</taxon>
        <taxon>Rhabditidae</taxon>
        <taxon>Peloderinae</taxon>
        <taxon>Caenorhabditis</taxon>
    </lineage>
</organism>
<reference key="1">
    <citation type="submission" date="2007-07" db="EMBL/GenBank/DDBJ databases">
        <title>PCAP assembly of the Caenorhabditis remanei genome.</title>
        <authorList>
            <consortium name="Caenorhabditis remanei Sequencing Consortium"/>
            <person name="Wilson R.K."/>
        </authorList>
    </citation>
    <scope>NUCLEOTIDE SEQUENCE [LARGE SCALE GENOMIC DNA]</scope>
    <source>
        <strain>PB4641</strain>
    </source>
</reference>
<reference evidence="7 8" key="2">
    <citation type="journal article" date="2016" name="Proc. Natl. Acad. Sci. U.S.A.">
        <title>PGL germ granule assembly protein is a base-specific, single-stranded RNase.</title>
        <authorList>
            <person name="Aoki S.T."/>
            <person name="Kershner A.M."/>
            <person name="Bingman C.A."/>
            <person name="Wickens M."/>
            <person name="Kimble J."/>
        </authorList>
    </citation>
    <scope>X-RAY CRYSTALLOGRAPHY (1.60 ANGSTROMS) OF 203-464</scope>
    <scope>FUNCTION</scope>
    <scope>CATALYTIC ACTIVITY</scope>
    <scope>SUBUNIT</scope>
    <scope>DOMAIN</scope>
</reference>
<feature type="chain" id="PRO_0000443016" description="Guanyl-specific ribonuclease pgl-1" evidence="4">
    <location>
        <begin position="1"/>
        <end position="779"/>
    </location>
</feature>
<feature type="region of interest" description="Involved in dimerization" evidence="3">
    <location>
        <begin position="203"/>
        <end position="464"/>
    </location>
</feature>
<feature type="region of interest" description="Disordered" evidence="2">
    <location>
        <begin position="563"/>
        <end position="596"/>
    </location>
</feature>
<feature type="region of interest" description="Disordered" evidence="2">
    <location>
        <begin position="611"/>
        <end position="661"/>
    </location>
</feature>
<feature type="region of interest" description="RNA-binding RGG-box" evidence="1">
    <location>
        <begin position="699"/>
        <end position="772"/>
    </location>
</feature>
<feature type="region of interest" description="Disordered" evidence="2">
    <location>
        <begin position="718"/>
        <end position="779"/>
    </location>
</feature>
<feature type="compositionally biased region" description="Polar residues" evidence="2">
    <location>
        <begin position="584"/>
        <end position="595"/>
    </location>
</feature>
<feature type="compositionally biased region" description="Basic and acidic residues" evidence="2">
    <location>
        <begin position="612"/>
        <end position="626"/>
    </location>
</feature>
<feature type="active site" description="Proton acceptor" evidence="1">
    <location>
        <position position="453"/>
    </location>
</feature>
<feature type="helix" evidence="9">
    <location>
        <begin position="217"/>
        <end position="223"/>
    </location>
</feature>
<feature type="helix" evidence="9">
    <location>
        <begin position="228"/>
        <end position="245"/>
    </location>
</feature>
<feature type="helix" evidence="9">
    <location>
        <begin position="251"/>
        <end position="273"/>
    </location>
</feature>
<feature type="helix" evidence="9">
    <location>
        <begin position="277"/>
        <end position="285"/>
    </location>
</feature>
<feature type="helix" evidence="9">
    <location>
        <begin position="289"/>
        <end position="295"/>
    </location>
</feature>
<feature type="turn" evidence="9">
    <location>
        <begin position="297"/>
        <end position="299"/>
    </location>
</feature>
<feature type="helix" evidence="9">
    <location>
        <begin position="300"/>
        <end position="318"/>
    </location>
</feature>
<feature type="turn" evidence="9">
    <location>
        <begin position="343"/>
        <end position="347"/>
    </location>
</feature>
<feature type="helix" evidence="9">
    <location>
        <begin position="348"/>
        <end position="352"/>
    </location>
</feature>
<feature type="helix" evidence="9">
    <location>
        <begin position="355"/>
        <end position="373"/>
    </location>
</feature>
<feature type="strand" evidence="9">
    <location>
        <begin position="377"/>
        <end position="379"/>
    </location>
</feature>
<feature type="helix" evidence="9">
    <location>
        <begin position="391"/>
        <end position="410"/>
    </location>
</feature>
<feature type="turn" evidence="9">
    <location>
        <begin position="411"/>
        <end position="413"/>
    </location>
</feature>
<feature type="helix" evidence="9">
    <location>
        <begin position="418"/>
        <end position="422"/>
    </location>
</feature>
<feature type="turn" evidence="9">
    <location>
        <begin position="423"/>
        <end position="426"/>
    </location>
</feature>
<feature type="helix" evidence="9">
    <location>
        <begin position="429"/>
        <end position="442"/>
    </location>
</feature>
<feature type="turn" evidence="9">
    <location>
        <begin position="443"/>
        <end position="445"/>
    </location>
</feature>
<feature type="helix" evidence="9">
    <location>
        <begin position="448"/>
        <end position="463"/>
    </location>
</feature>
<protein>
    <recommendedName>
        <fullName evidence="4">Guanyl-specific ribonuclease pgl-1</fullName>
        <ecNumber evidence="3">4.6.1.24</ecNumber>
    </recommendedName>
    <alternativeName>
        <fullName>P granule abnormality protein 1</fullName>
    </alternativeName>
</protein>
<gene>
    <name evidence="6" type="primary">pgl-1</name>
    <name evidence="6" type="ORF">CRE_08178</name>
</gene>
<dbReference type="EC" id="4.6.1.24" evidence="3"/>
<dbReference type="EMBL" id="DS268423">
    <property type="protein sequence ID" value="EFO90587.1"/>
    <property type="molecule type" value="Genomic_DNA"/>
</dbReference>
<dbReference type="RefSeq" id="XP_003109222.1">
    <property type="nucleotide sequence ID" value="XM_003109174.1"/>
</dbReference>
<dbReference type="PDB" id="5COW">
    <property type="method" value="X-ray"/>
    <property type="resolution" value="1.60 A"/>
    <property type="chains" value="A=203-464"/>
</dbReference>
<dbReference type="PDB" id="5CV3">
    <property type="method" value="X-ray"/>
    <property type="resolution" value="3.17 A"/>
    <property type="chains" value="A=203-464"/>
</dbReference>
<dbReference type="PDBsum" id="5COW"/>
<dbReference type="PDBsum" id="5CV3"/>
<dbReference type="SMR" id="E3M3V1"/>
<dbReference type="STRING" id="31234.E3M3V1"/>
<dbReference type="EnsemblMetazoa" id="CRE08178.1">
    <property type="protein sequence ID" value="CRE08178.1"/>
    <property type="gene ID" value="WBGene00079876"/>
</dbReference>
<dbReference type="eggNOG" id="ENOG502QVYU">
    <property type="taxonomic scope" value="Eukaryota"/>
</dbReference>
<dbReference type="HOGENOM" id="CLU_362575_0_0_1"/>
<dbReference type="OMA" id="ASWIVEC"/>
<dbReference type="OrthoDB" id="5830648at2759"/>
<dbReference type="EvolutionaryTrace" id="E3M3V1"/>
<dbReference type="Proteomes" id="UP000008281">
    <property type="component" value="Unassembled WGS sequence"/>
</dbReference>
<dbReference type="GO" id="GO:0042802">
    <property type="term" value="F:identical protein binding"/>
    <property type="evidence" value="ECO:0000353"/>
    <property type="project" value="WormBase"/>
</dbReference>
<dbReference type="GO" id="GO:0016829">
    <property type="term" value="F:lyase activity"/>
    <property type="evidence" value="ECO:0007669"/>
    <property type="project" value="UniProtKB-KW"/>
</dbReference>
<dbReference type="GO" id="GO:0046589">
    <property type="term" value="F:ribonuclease T1 activity"/>
    <property type="evidence" value="ECO:0007669"/>
    <property type="project" value="UniProtKB-EC"/>
</dbReference>
<dbReference type="GO" id="GO:0003723">
    <property type="term" value="F:RNA binding"/>
    <property type="evidence" value="ECO:0007669"/>
    <property type="project" value="UniProtKB-KW"/>
</dbReference>
<dbReference type="GO" id="GO:0004521">
    <property type="term" value="F:RNA endonuclease activity"/>
    <property type="evidence" value="ECO:0000314"/>
    <property type="project" value="WormBase"/>
</dbReference>
<dbReference type="GO" id="GO:0048477">
    <property type="term" value="P:oogenesis"/>
    <property type="evidence" value="ECO:0007669"/>
    <property type="project" value="UniProtKB-KW"/>
</dbReference>
<proteinExistence type="evidence at protein level"/>
<accession>E3M3V1</accession>
<sequence length="779" mass="84661">MENNKRGVVEAKGIKSHYFQTLANYVSNNLELLHNNPKQANSFAASVFGSTAPIDEKDLLDLLVPSDANADALAAGMDCCLLLGEKYRPHFDAAVQQLARLGRTHDVATVIDDEKKFTALSKKTKLKKTDEAKILQAFFKIHSTEDEEKFEAISELCQLDLDFDAYVFIKALTLENEENQELVETIKDNLVEAWNKSNPLLVKLLLEGVKEQDPVDKFTYLLLQPLTEATLSDAVNFIVEKYSAELPDEGDASLVVRSQLGCQFFFLVTRTLAHDQRELAKLVQTLIPRPVRLEVFPGLQRSVFKSSVFLGHHIIQIFMGCEFCSIQSIKNTMFSAKKPFQDWSFVGLAQDFECPWRRLAIAELLKKFSVSVVEKVFDNPVALIPQHESDNEALIELVTNALRFALWIVEFYETETNEKSIKELAFLDHSSKTLLIESFTKFLQGKDVKDQDHLKRIIDALEKSRTQETKSNLEYSREEIKTKMPSSSSAKAQVLHGLNTSAAAGLIVPSLSLLEIPVDEVDSTSHLTTSKDIGQGVFVKAQDTVTEKQKEAPLVAQQTAFHHEPQTATLVPPSPNEESMAAESISTDGWDSPTKSVVLPLDDMILEEEERDALKPDSVNSHRSEETTPVPEQLPQETSERVTSPPPGERSRTAWGDGDATPMILATPTNDYKVSGFGGAKLAKGFGTMGSTGGGFGGGGGGGSYGGRGGYGGGDRGGRGGGFGGGDRGGRGGYGGGDRGGRGGGYGGGDRGGYGQRGGYVAGGDRGGRGGYRGGGGNF</sequence>
<comment type="function">
    <text evidence="1 3">Guanyl-specific endoribonuclease which cleaves the phosphodiester bond in single-stranded RNA between the 3'-guanylic residue and the 5'-OH residue of adjacent nucleotide, resulting in the formation of a corresponding 2',3'-cyclic phosphate intermediate (PubMed:26787882). Essential role in male and female postembryonic germline development; maternally provided protein maintains a population of proliferating germ cells and zygotic expression is required for correct oogenesis (By similarity). Together with the P-granule component pgl-3, is involved in the formation of P-granules (By similarity). Together with pgl-3, probably recruits other granule components such as pos-1, mex-3 and glh-1 to P-granules (By similarity). In addition, may act redundantly with pgl-3 to protect germ cells from excessive germline apoptosis during normal oogenesis and development of the two gonadal arms (By similarity). This may in part be through regulating the localization of sir-2.1 which is involved in germ cell apoptosis (By similarity). May protect somatic cells from excessive apoptosis during normal development (By similarity).</text>
</comment>
<comment type="catalytic activity">
    <reaction evidence="3">
        <text>[RNA] containing guanosine + H2O = an [RNA fragment]-3'-guanosine-3'-phosphate + a 5'-hydroxy-ribonucleotide-3'-[RNA fragment].</text>
        <dbReference type="EC" id="4.6.1.24"/>
    </reaction>
</comment>
<comment type="cofactor">
    <text evidence="1">Does not require metal ions for catalytic activity.</text>
</comment>
<comment type="subunit">
    <text evidence="1 3">Homodimer (PubMed:26787882). Interacts with pgl-2 and pgl-3; this association is not required for P-granule localization of either pgl-2 or pgl-3 (By similarity). Interacts with ife-1 (By similarity). Interacts with prmt-1; the interaction is direct (By similarity). Interacts with nmad-1 (By similarity). Interacts with P granule components meg-1, meg-3 and meg-4 (By similarity).</text>
</comment>
<comment type="subcellular location">
    <subcellularLocation>
        <location evidence="1">Cytoplasmic granule</location>
    </subcellularLocation>
    <text evidence="1">Localizes to P granules in germline precursor cells. Localizes to P granules in germ cells at all stages of development except in spermatogenesis. Co-localizes with pgl-3 in P-granules, but localization in P-granules is not dependent on an association with pgl-3.</text>
</comment>
<comment type="domain">
    <text evidence="5">The dimerization domain also acts as a hinge; changes in its structure probably impact oligomerization and RNA-binding.</text>
</comment>
<comment type="domain">
    <text evidence="1">The RNA-binding RGG-box is required for the recruitment of some P-granule components such as pos-1 and probably mRNA, but is dispensable for granule formation.</text>
</comment>